<name>NCPP_ENTCL</name>
<organism>
    <name type="scientific">Enterobacter cloacae</name>
    <dbReference type="NCBI Taxonomy" id="550"/>
    <lineage>
        <taxon>Bacteria</taxon>
        <taxon>Pseudomonadati</taxon>
        <taxon>Pseudomonadota</taxon>
        <taxon>Gammaproteobacteria</taxon>
        <taxon>Enterobacterales</taxon>
        <taxon>Enterobacteriaceae</taxon>
        <taxon>Enterobacter</taxon>
        <taxon>Enterobacter cloacae complex</taxon>
    </lineage>
</organism>
<evidence type="ECO:0000250" key="1">
    <source>
        <dbReference type="UniProtKB" id="P39411"/>
    </source>
</evidence>
<evidence type="ECO:0000305" key="2"/>
<protein>
    <recommendedName>
        <fullName evidence="1">Inosine/xanthosine triphosphatase</fullName>
        <shortName evidence="1">ITPase/XTPase</shortName>
        <ecNumber evidence="1">3.6.1.73</ecNumber>
    </recommendedName>
    <alternativeName>
        <fullName evidence="1">Non-canonical purine NTP phosphatase</fullName>
    </alternativeName>
    <alternativeName>
        <fullName evidence="1">Non-standard purine NTP phosphatase</fullName>
    </alternativeName>
    <alternativeName>
        <fullName evidence="1">Nucleoside-triphosphate phosphatase</fullName>
        <shortName evidence="1">NTPase</shortName>
    </alternativeName>
</protein>
<comment type="function">
    <text evidence="1">Phosphatase that hydrolyzes non-canonical purine nucleotides such as XTP and ITP to their respective diphosphate derivatives. Probably excludes non-canonical purines from DNA/RNA precursor pool, thus preventing their incorporation into DNA/RNA and avoiding chromosomal lesions.</text>
</comment>
<comment type="catalytic activity">
    <reaction evidence="1">
        <text>XTP + H2O = XDP + phosphate + H(+)</text>
        <dbReference type="Rhea" id="RHEA:28406"/>
        <dbReference type="ChEBI" id="CHEBI:15377"/>
        <dbReference type="ChEBI" id="CHEBI:15378"/>
        <dbReference type="ChEBI" id="CHEBI:43474"/>
        <dbReference type="ChEBI" id="CHEBI:59884"/>
        <dbReference type="ChEBI" id="CHEBI:61314"/>
        <dbReference type="EC" id="3.6.1.73"/>
    </reaction>
</comment>
<comment type="catalytic activity">
    <reaction evidence="1">
        <text>ITP + H2O = IDP + phosphate + H(+)</text>
        <dbReference type="Rhea" id="RHEA:28330"/>
        <dbReference type="ChEBI" id="CHEBI:15377"/>
        <dbReference type="ChEBI" id="CHEBI:15378"/>
        <dbReference type="ChEBI" id="CHEBI:43474"/>
        <dbReference type="ChEBI" id="CHEBI:58280"/>
        <dbReference type="ChEBI" id="CHEBI:61402"/>
        <dbReference type="EC" id="3.6.1.73"/>
    </reaction>
</comment>
<comment type="cofactor">
    <cofactor evidence="1">
        <name>Mg(2+)</name>
        <dbReference type="ChEBI" id="CHEBI:18420"/>
    </cofactor>
    <cofactor evidence="1">
        <name>Mn(2+)</name>
        <dbReference type="ChEBI" id="CHEBI:29035"/>
    </cofactor>
    <text evidence="1">Binds 1 divalent metal cation per subunit; can use either Mg(2+) or Mn(2+).</text>
</comment>
<comment type="subunit">
    <text evidence="1">Homodimer.</text>
</comment>
<comment type="similarity">
    <text evidence="2">Belongs to the YjjX NTPase family.</text>
</comment>
<reference key="1">
    <citation type="journal article" date="1994" name="Nucleic Acids Res.">
        <title>The tryptophan repressor sequence is highly conserved among the Enterobacteriaceae.</title>
        <authorList>
            <person name="Arvidson D.N."/>
            <person name="Arvidson C.G."/>
            <person name="Lawson C.L."/>
            <person name="Miner J."/>
            <person name="Adams C."/>
            <person name="Youderian P."/>
        </authorList>
    </citation>
    <scope>NUCLEOTIDE SEQUENCE [GENOMIC DNA]</scope>
</reference>
<accession>P39431</accession>
<feature type="chain" id="PRO_0000156341" description="Inosine/xanthosine triphosphatase">
    <location>
        <begin position="1" status="less than"/>
        <end position="67"/>
    </location>
</feature>
<feature type="non-terminal residue">
    <location>
        <position position="1"/>
    </location>
</feature>
<proteinExistence type="inferred from homology"/>
<keyword id="KW-0378">Hydrolase</keyword>
<keyword id="KW-0460">Magnesium</keyword>
<keyword id="KW-0464">Manganese</keyword>
<keyword id="KW-0479">Metal-binding</keyword>
<keyword id="KW-0546">Nucleotide metabolism</keyword>
<keyword id="KW-0547">Nucleotide-binding</keyword>
<sequence>PLPEIILNKVREGEALGPVMSQYTGIDEIGRKEGAIGVFTKGVLTRSGVYHQAVVLALSPFHNAIYR</sequence>
<dbReference type="EC" id="3.6.1.73" evidence="1"/>
<dbReference type="EMBL" id="L26583">
    <property type="protein sequence ID" value="AAA20184.1"/>
    <property type="molecule type" value="Unassigned_DNA"/>
</dbReference>
<dbReference type="PIR" id="S45258">
    <property type="entry name" value="S45258"/>
</dbReference>
<dbReference type="SMR" id="P39431"/>
<dbReference type="eggNOG" id="COG1986">
    <property type="taxonomic scope" value="Bacteria"/>
</dbReference>
<dbReference type="GO" id="GO:0103023">
    <property type="term" value="F:ITPase activity"/>
    <property type="evidence" value="ECO:0007669"/>
    <property type="project" value="UniProtKB-EC"/>
</dbReference>
<dbReference type="GO" id="GO:0046872">
    <property type="term" value="F:metal ion binding"/>
    <property type="evidence" value="ECO:0007669"/>
    <property type="project" value="UniProtKB-KW"/>
</dbReference>
<dbReference type="GO" id="GO:0000166">
    <property type="term" value="F:nucleotide binding"/>
    <property type="evidence" value="ECO:0007669"/>
    <property type="project" value="UniProtKB-KW"/>
</dbReference>
<dbReference type="GO" id="GO:0017111">
    <property type="term" value="F:ribonucleoside triphosphate phosphatase activity"/>
    <property type="evidence" value="ECO:0000250"/>
    <property type="project" value="UniProtKB"/>
</dbReference>
<dbReference type="GO" id="GO:0009117">
    <property type="term" value="P:nucleotide metabolic process"/>
    <property type="evidence" value="ECO:0007669"/>
    <property type="project" value="UniProtKB-KW"/>
</dbReference>
<dbReference type="GO" id="GO:0006772">
    <property type="term" value="P:thiamine metabolic process"/>
    <property type="evidence" value="ECO:0007669"/>
    <property type="project" value="TreeGrafter"/>
</dbReference>
<dbReference type="FunFam" id="3.90.950.10:FF:000034">
    <property type="entry name" value="Inosine/xanthosine triphosphatase"/>
    <property type="match status" value="1"/>
</dbReference>
<dbReference type="Gene3D" id="3.90.950.10">
    <property type="match status" value="1"/>
</dbReference>
<dbReference type="InterPro" id="IPR029001">
    <property type="entry name" value="ITPase-like_fam"/>
</dbReference>
<dbReference type="InterPro" id="IPR026533">
    <property type="entry name" value="NTPase/PRRC1"/>
</dbReference>
<dbReference type="InterPro" id="IPR050299">
    <property type="entry name" value="YjjX_NTPase"/>
</dbReference>
<dbReference type="PANTHER" id="PTHR34699">
    <property type="match status" value="1"/>
</dbReference>
<dbReference type="PANTHER" id="PTHR34699:SF2">
    <property type="entry name" value="NON-CANONICAL PURINE NTP PHOSPHATASE_PRRC1 DOMAIN-CONTAINING PROTEIN"/>
    <property type="match status" value="1"/>
</dbReference>
<dbReference type="Pfam" id="PF01931">
    <property type="entry name" value="NTPase_I-T"/>
    <property type="match status" value="1"/>
</dbReference>
<dbReference type="SUPFAM" id="SSF52972">
    <property type="entry name" value="ITPase-like"/>
    <property type="match status" value="1"/>
</dbReference>